<name>IF122_DANRE</name>
<protein>
    <recommendedName>
        <fullName>Intraflagellar transport protein 122 homolog</fullName>
    </recommendedName>
</protein>
<proteinExistence type="evidence at transcript level"/>
<feature type="chain" id="PRO_0000398817" description="Intraflagellar transport protein 122 homolog">
    <location>
        <begin position="1"/>
        <end position="1187"/>
    </location>
</feature>
<feature type="repeat" description="WD 1">
    <location>
        <begin position="16"/>
        <end position="54"/>
    </location>
</feature>
<feature type="repeat" description="WD 2">
    <location>
        <begin position="57"/>
        <end position="97"/>
    </location>
</feature>
<feature type="repeat" description="WD 3">
    <location>
        <begin position="99"/>
        <end position="135"/>
    </location>
</feature>
<feature type="repeat" description="WD 4">
    <location>
        <begin position="137"/>
        <end position="175"/>
    </location>
</feature>
<feature type="repeat" description="WD 5">
    <location>
        <begin position="180"/>
        <end position="223"/>
    </location>
</feature>
<feature type="repeat" description="WD 6">
    <location>
        <begin position="225"/>
        <end position="264"/>
    </location>
</feature>
<feature type="repeat" description="WD 7">
    <location>
        <begin position="266"/>
        <end position="306"/>
    </location>
</feature>
<feature type="repeat" description="WD 8">
    <location>
        <begin position="459"/>
        <end position="498"/>
    </location>
</feature>
<feature type="region of interest" description="Disordered" evidence="2">
    <location>
        <begin position="1070"/>
        <end position="1094"/>
    </location>
</feature>
<keyword id="KW-0966">Cell projection</keyword>
<keyword id="KW-0969">Cilium</keyword>
<keyword id="KW-0970">Cilium biogenesis/degradation</keyword>
<keyword id="KW-0963">Cytoplasm</keyword>
<keyword id="KW-0206">Cytoskeleton</keyword>
<keyword id="KW-0217">Developmental protein</keyword>
<keyword id="KW-1185">Reference proteome</keyword>
<keyword id="KW-0677">Repeat</keyword>
<keyword id="KW-0853">WD repeat</keyword>
<reference key="1">
    <citation type="submission" date="2004-02" db="EMBL/GenBank/DDBJ databases">
        <authorList>
            <consortium name="NIH - Zebrafish Gene Collection (ZGC) project"/>
        </authorList>
    </citation>
    <scope>NUCLEOTIDE SEQUENCE [LARGE SCALE MRNA]</scope>
    <source>
        <tissue>Embryo</tissue>
    </source>
</reference>
<reference key="2">
    <citation type="journal article" date="2010" name="Am. J. Hum. Genet.">
        <title>Cranioectodermal dysplasia, Sensenbrenner syndrome, is a ciliopathy caused by mutations in the IFT122 gene.</title>
        <authorList>
            <person name="Walczak-Sztulpa J."/>
            <person name="Eggenschwiler J."/>
            <person name="Osborn D."/>
            <person name="Brown D.A."/>
            <person name="Emma F."/>
            <person name="Klingenberg C."/>
            <person name="Hennekam R.C."/>
            <person name="Torre G."/>
            <person name="Garshasbi M."/>
            <person name="Tzschach A."/>
            <person name="Szczepanska M."/>
            <person name="Krawczynski M."/>
            <person name="Zachwieja J."/>
            <person name="Zwolinska D."/>
            <person name="Beales P.L."/>
            <person name="Ropers H.H."/>
            <person name="Latos-Bielenska A."/>
            <person name="Kuss A.W."/>
        </authorList>
    </citation>
    <scope>FUNCTION</scope>
    <scope>DISRUPTION PHENOTYPE</scope>
</reference>
<sequence>MRAVPTWIDKVHDRDKVEQCIYDLAFRPDGSQLIVAAGNRVLVYDTADGTLIQPLKGHKDTVYCVAYAKDGKRFASGSADKSIIIWTSKLEGILKYTHNDSIQCVSYNPVTHQLASCSSGDFGLWSPEQKSVSKHKVSSKITCCGWTNDGQYLALGMMNGVVSIRNKNGEEKVKIERPGGSSSPVWSIAWNPSKDEHNDILAVADWGQKLSFYQLSGKQIGKDRSLTFDPCCVSFFSKGEYMVLCGSDRQAALYTRDGVRLGSIAEQNAWVWTCRVKPDSNYVVVGCQDGTIAFFQLIFSTVHGLYKDRYAYRDSMTDVIVQHLITEQKVRIKCRELVKKIAIYRSRLAIQLPEKILIYELLSDDSADMHYRVKEKICRRFECNLLVVCSQHIILCQEKRLQCLSFTALRQREWLMESLIRYIKVIGGPAGREGLLVGLKNGAILKIFVDNPFPITLLKQNTSVRCLDMSSNRSRLAVVDEHNTCLVYDIHTRELLFQEPNANSVAWNTQCEDMLCFSGGGFLNIKACSFPVHQQKLQGFVVGYNGSRIFCLHVYSMAAVEVPQSAPMYQYLERRMFQQAYNIACLGVTDSDWRDLATEALEGLDFHTAKKAFIRIRDLRYLELISSIEERKKRGETDNQLFLADVFAYQGKFHEAAKLYRRSGQDGRALSMYTDLRMFDYAKDFLGSADPKDTKLLMKKQADWAKNSREPRAAAEMYLSAGEHLKAIQIIGEHGWVDMLIDVGRRLDKAERAALSRCAVFLQQLQQHGYAAELYSKMGDLRALLQLHVHATHWDEAFSLVEKHPQFRDDVYVPYAQWLAEHDRFEEAQRAFHKAGRQAEAVRVLEQLTHNAVVESRFSDASYYYWMLSMQCLDIAREDSEQKQEMLKKFHSFQHLAELYHVYHSVHRYMSEPFSSNMPEILFNISRFLFHNLSTHTPMGISKVDTLYALAKQSKLLGAYKVSRHAFEKLQSLKIPARYQDSVELSSLTVRSKPYRDNEDLIPMCYRCSTNNPLLNNQGNSCINCRQPFIFSASSYEVLPLVEFYLDQGISDEEAVSLIDLEVPRVEKNKSWQEMSSGESQCLKLEDGPDDPEDDPFTAKLSFEQGGSVFVPVRVSRAVLRSMSRRDVLIKRWPAPLSWQYYRSLLPDVSITMCPSCFQMFHSEDYELLVLQHSCCPFCRRPIDESC</sequence>
<organism>
    <name type="scientific">Danio rerio</name>
    <name type="common">Zebrafish</name>
    <name type="synonym">Brachydanio rerio</name>
    <dbReference type="NCBI Taxonomy" id="7955"/>
    <lineage>
        <taxon>Eukaryota</taxon>
        <taxon>Metazoa</taxon>
        <taxon>Chordata</taxon>
        <taxon>Craniata</taxon>
        <taxon>Vertebrata</taxon>
        <taxon>Euteleostomi</taxon>
        <taxon>Actinopterygii</taxon>
        <taxon>Neopterygii</taxon>
        <taxon>Teleostei</taxon>
        <taxon>Ostariophysi</taxon>
        <taxon>Cypriniformes</taxon>
        <taxon>Danionidae</taxon>
        <taxon>Danioninae</taxon>
        <taxon>Danio</taxon>
    </lineage>
</organism>
<gene>
    <name type="primary">ift122</name>
    <name type="ORF">zgc:77217</name>
</gene>
<evidence type="ECO:0000250" key="1">
    <source>
        <dbReference type="UniProtKB" id="Q9HBG6"/>
    </source>
</evidence>
<evidence type="ECO:0000256" key="2">
    <source>
        <dbReference type="SAM" id="MobiDB-lite"/>
    </source>
</evidence>
<evidence type="ECO:0000269" key="3">
    <source>
    </source>
</evidence>
<comment type="function">
    <text evidence="3">Required for cilia formation during embryonal development. Acts as a negative regulator of Shh signaling.</text>
</comment>
<comment type="subunit">
    <text evidence="1">Component of the IFT complex A (IFT-A) complex.</text>
</comment>
<comment type="subcellular location">
    <subcellularLocation>
        <location evidence="1">Cell projection</location>
        <location evidence="1">Cilium</location>
    </subcellularLocation>
    <subcellularLocation>
        <location evidence="1">Cytoplasm</location>
        <location evidence="1">Cytoskeleton</location>
        <location evidence="1">Cilium basal body</location>
    </subcellularLocation>
</comment>
<comment type="disruption phenotype">
    <text evidence="3">Reduced number of cilia in embryonal pronephric duct and shortened primary cilia in Kupffer's vesicle. Embryos show shortened body axis and curvature, cardiac edema, small eyes, pronephric cysts and a distended cranium; shh signaling is reduced.</text>
</comment>
<dbReference type="EMBL" id="BC066599">
    <property type="protein sequence ID" value="AAH66599.1"/>
    <property type="molecule type" value="mRNA"/>
</dbReference>
<dbReference type="RefSeq" id="NP_998055.1">
    <property type="nucleotide sequence ID" value="NM_212890.1"/>
</dbReference>
<dbReference type="SMR" id="Q6NYH1"/>
<dbReference type="FunCoup" id="Q6NYH1">
    <property type="interactions" value="721"/>
</dbReference>
<dbReference type="GeneID" id="405826"/>
<dbReference type="KEGG" id="dre:405826"/>
<dbReference type="AGR" id="ZFIN:ZDB-GENE-040426-2449"/>
<dbReference type="CTD" id="55764"/>
<dbReference type="ZFIN" id="ZDB-GENE-040426-2449">
    <property type="gene designation" value="ift122"/>
</dbReference>
<dbReference type="InParanoid" id="Q6NYH1"/>
<dbReference type="OrthoDB" id="10255582at2759"/>
<dbReference type="PhylomeDB" id="Q6NYH1"/>
<dbReference type="PRO" id="PR:Q6NYH1"/>
<dbReference type="Proteomes" id="UP000000437">
    <property type="component" value="Unplaced"/>
</dbReference>
<dbReference type="GO" id="GO:0036064">
    <property type="term" value="C:ciliary basal body"/>
    <property type="evidence" value="ECO:0000250"/>
    <property type="project" value="UniProtKB"/>
</dbReference>
<dbReference type="GO" id="GO:0005929">
    <property type="term" value="C:cilium"/>
    <property type="evidence" value="ECO:0000250"/>
    <property type="project" value="UniProtKB"/>
</dbReference>
<dbReference type="GO" id="GO:0005737">
    <property type="term" value="C:cytoplasm"/>
    <property type="evidence" value="ECO:0007669"/>
    <property type="project" value="UniProtKB-KW"/>
</dbReference>
<dbReference type="GO" id="GO:0030991">
    <property type="term" value="C:intraciliary transport particle A"/>
    <property type="evidence" value="ECO:0000250"/>
    <property type="project" value="UniProtKB"/>
</dbReference>
<dbReference type="GO" id="GO:0097730">
    <property type="term" value="C:non-motile cilium"/>
    <property type="evidence" value="ECO:0000318"/>
    <property type="project" value="GO_Central"/>
</dbReference>
<dbReference type="GO" id="GO:0048593">
    <property type="term" value="P:camera-type eye morphogenesis"/>
    <property type="evidence" value="ECO:0000315"/>
    <property type="project" value="UniProtKB"/>
</dbReference>
<dbReference type="GO" id="GO:0060271">
    <property type="term" value="P:cilium assembly"/>
    <property type="evidence" value="ECO:0000315"/>
    <property type="project" value="GO_Central"/>
</dbReference>
<dbReference type="GO" id="GO:0007507">
    <property type="term" value="P:heart development"/>
    <property type="evidence" value="ECO:0000315"/>
    <property type="project" value="UniProtKB"/>
</dbReference>
<dbReference type="GO" id="GO:0035721">
    <property type="term" value="P:intraciliary retrograde transport"/>
    <property type="evidence" value="ECO:0000250"/>
    <property type="project" value="UniProtKB"/>
</dbReference>
<dbReference type="GO" id="GO:0042073">
    <property type="term" value="P:intraciliary transport"/>
    <property type="evidence" value="ECO:0000250"/>
    <property type="project" value="UniProtKB"/>
</dbReference>
<dbReference type="GO" id="GO:0032402">
    <property type="term" value="P:melanosome transport"/>
    <property type="evidence" value="ECO:0000315"/>
    <property type="project" value="ZFIN"/>
</dbReference>
<dbReference type="GO" id="GO:0001823">
    <property type="term" value="P:mesonephros development"/>
    <property type="evidence" value="ECO:0000315"/>
    <property type="project" value="GO_Central"/>
</dbReference>
<dbReference type="GO" id="GO:0045879">
    <property type="term" value="P:negative regulation of smoothened signaling pathway"/>
    <property type="evidence" value="ECO:0000250"/>
    <property type="project" value="UniProtKB"/>
</dbReference>
<dbReference type="GO" id="GO:1905515">
    <property type="term" value="P:non-motile cilium assembly"/>
    <property type="evidence" value="ECO:0000318"/>
    <property type="project" value="GO_Central"/>
</dbReference>
<dbReference type="GO" id="GO:0036372">
    <property type="term" value="P:opsin transport"/>
    <property type="evidence" value="ECO:0000315"/>
    <property type="project" value="ZFIN"/>
</dbReference>
<dbReference type="GO" id="GO:0045494">
    <property type="term" value="P:photoreceptor cell maintenance"/>
    <property type="evidence" value="ECO:0000315"/>
    <property type="project" value="ZFIN"/>
</dbReference>
<dbReference type="GO" id="GO:0008594">
    <property type="term" value="P:photoreceptor cell morphogenesis"/>
    <property type="evidence" value="ECO:0000315"/>
    <property type="project" value="ZFIN"/>
</dbReference>
<dbReference type="GO" id="GO:0061512">
    <property type="term" value="P:protein localization to cilium"/>
    <property type="evidence" value="ECO:0000250"/>
    <property type="project" value="UniProtKB"/>
</dbReference>
<dbReference type="GO" id="GO:0008589">
    <property type="term" value="P:regulation of smoothened signaling pathway"/>
    <property type="evidence" value="ECO:0000315"/>
    <property type="project" value="UniProtKB"/>
</dbReference>
<dbReference type="FunFam" id="1.25.40.470:FF:000005">
    <property type="entry name" value="Intraflagellar transport protein 122 homolog"/>
    <property type="match status" value="1"/>
</dbReference>
<dbReference type="FunFam" id="2.130.10.10:FF:000176">
    <property type="entry name" value="Intraflagellar transport protein 122 homolog"/>
    <property type="match status" value="1"/>
</dbReference>
<dbReference type="FunFam" id="1.25.40.470:FF:000003">
    <property type="entry name" value="intraflagellar transport protein 122 homolog"/>
    <property type="match status" value="1"/>
</dbReference>
<dbReference type="Gene3D" id="1.25.40.470">
    <property type="match status" value="1"/>
</dbReference>
<dbReference type="Gene3D" id="2.130.10.10">
    <property type="entry name" value="YVTN repeat-like/Quinoprotein amine dehydrogenase"/>
    <property type="match status" value="1"/>
</dbReference>
<dbReference type="InterPro" id="IPR056153">
    <property type="entry name" value="Beta-prop_IFT122_1st"/>
</dbReference>
<dbReference type="InterPro" id="IPR056152">
    <property type="entry name" value="Beta-prop_IFT122_2nd"/>
</dbReference>
<dbReference type="InterPro" id="IPR039857">
    <property type="entry name" value="Ift122/121"/>
</dbReference>
<dbReference type="InterPro" id="IPR015943">
    <property type="entry name" value="WD40/YVTN_repeat-like_dom_sf"/>
</dbReference>
<dbReference type="InterPro" id="IPR036322">
    <property type="entry name" value="WD40_repeat_dom_sf"/>
</dbReference>
<dbReference type="InterPro" id="IPR001680">
    <property type="entry name" value="WD40_rpt"/>
</dbReference>
<dbReference type="InterPro" id="IPR056838">
    <property type="entry name" value="Zn_ribbon_IFT122"/>
</dbReference>
<dbReference type="PANTHER" id="PTHR12764:SF4">
    <property type="entry name" value="INTRAFLAGELLAR TRANSPORT PROTEIN 122 HOMOLOG"/>
    <property type="match status" value="1"/>
</dbReference>
<dbReference type="PANTHER" id="PTHR12764">
    <property type="entry name" value="WD REPEAT DOMAIN-RELATED"/>
    <property type="match status" value="1"/>
</dbReference>
<dbReference type="Pfam" id="PF23381">
    <property type="entry name" value="Beta-prop_IFT122_1st"/>
    <property type="match status" value="2"/>
</dbReference>
<dbReference type="Pfam" id="PF23377">
    <property type="entry name" value="Beta-prop_IFT122_2nd"/>
    <property type="match status" value="1"/>
</dbReference>
<dbReference type="Pfam" id="PF25295">
    <property type="entry name" value="TPR_IFT122"/>
    <property type="match status" value="1"/>
</dbReference>
<dbReference type="Pfam" id="PF25144">
    <property type="entry name" value="Zn_ribbon_IFT122"/>
    <property type="match status" value="1"/>
</dbReference>
<dbReference type="Pfam" id="PF25143">
    <property type="entry name" value="Zn_ribbon_IFT122_C"/>
    <property type="match status" value="1"/>
</dbReference>
<dbReference type="SMART" id="SM00320">
    <property type="entry name" value="WD40"/>
    <property type="match status" value="8"/>
</dbReference>
<dbReference type="SUPFAM" id="SSF50978">
    <property type="entry name" value="WD40 repeat-like"/>
    <property type="match status" value="2"/>
</dbReference>
<dbReference type="PROSITE" id="PS50082">
    <property type="entry name" value="WD_REPEATS_2"/>
    <property type="match status" value="1"/>
</dbReference>
<dbReference type="PROSITE" id="PS50294">
    <property type="entry name" value="WD_REPEATS_REGION"/>
    <property type="match status" value="1"/>
</dbReference>
<accession>Q6NYH1</accession>